<keyword id="KW-0002">3D-structure</keyword>
<keyword id="KW-0175">Coiled coil</keyword>
<keyword id="KW-0407">Ion channel</keyword>
<keyword id="KW-0406">Ion transport</keyword>
<keyword id="KW-0472">Membrane</keyword>
<keyword id="KW-0539">Nucleus</keyword>
<keyword id="KW-0812">Transmembrane</keyword>
<keyword id="KW-1133">Transmembrane helix</keyword>
<keyword id="KW-0813">Transport</keyword>
<organism>
    <name type="scientific">Medicago truncatula</name>
    <name type="common">Barrel medic</name>
    <name type="synonym">Medicago tribuloides</name>
    <dbReference type="NCBI Taxonomy" id="3880"/>
    <lineage>
        <taxon>Eukaryota</taxon>
        <taxon>Viridiplantae</taxon>
        <taxon>Streptophyta</taxon>
        <taxon>Embryophyta</taxon>
        <taxon>Tracheophyta</taxon>
        <taxon>Spermatophyta</taxon>
        <taxon>Magnoliopsida</taxon>
        <taxon>eudicotyledons</taxon>
        <taxon>Gunneridae</taxon>
        <taxon>Pentapetalae</taxon>
        <taxon>rosids</taxon>
        <taxon>fabids</taxon>
        <taxon>Fabales</taxon>
        <taxon>Fabaceae</taxon>
        <taxon>Papilionoideae</taxon>
        <taxon>50 kb inversion clade</taxon>
        <taxon>NPAAA clade</taxon>
        <taxon>Hologalegina</taxon>
        <taxon>IRL clade</taxon>
        <taxon>Trifolieae</taxon>
        <taxon>Medicago</taxon>
    </lineage>
</organism>
<evidence type="ECO:0000255" key="1"/>
<evidence type="ECO:0000255" key="2">
    <source>
        <dbReference type="PROSITE-ProRule" id="PRU00543"/>
    </source>
</evidence>
<evidence type="ECO:0000256" key="3">
    <source>
        <dbReference type="SAM" id="MobiDB-lite"/>
    </source>
</evidence>
<evidence type="ECO:0000269" key="4">
    <source>
    </source>
</evidence>
<evidence type="ECO:0000269" key="5">
    <source>
    </source>
</evidence>
<evidence type="ECO:0000269" key="6">
    <source>
    </source>
</evidence>
<evidence type="ECO:0000269" key="7">
    <source>
    </source>
</evidence>
<evidence type="ECO:0000303" key="8">
    <source>
    </source>
</evidence>
<evidence type="ECO:0000305" key="9"/>
<evidence type="ECO:0007829" key="10">
    <source>
        <dbReference type="PDB" id="7VM8"/>
    </source>
</evidence>
<name>DMI1_MEDTR</name>
<dbReference type="EMBL" id="AY497771">
    <property type="protein sequence ID" value="AAS49490.1"/>
    <property type="molecule type" value="mRNA"/>
</dbReference>
<dbReference type="EMBL" id="AC140550">
    <property type="protein sequence ID" value="ABE79577.1"/>
    <property type="molecule type" value="Genomic_DNA"/>
</dbReference>
<dbReference type="PDB" id="7VM8">
    <property type="method" value="X-ray"/>
    <property type="resolution" value="3.03 A"/>
    <property type="chains" value="A=344-881"/>
</dbReference>
<dbReference type="PDBsum" id="7VM8"/>
<dbReference type="SMR" id="Q6RHR6"/>
<dbReference type="PaxDb" id="3880-AES63182"/>
<dbReference type="EnsemblPlants" id="rna7068">
    <property type="protein sequence ID" value="RHN71463.1"/>
    <property type="gene ID" value="gene7068"/>
</dbReference>
<dbReference type="GeneID" id="11433851"/>
<dbReference type="Gramene" id="rna7068">
    <property type="protein sequence ID" value="RHN71463.1"/>
    <property type="gene ID" value="gene7068"/>
</dbReference>
<dbReference type="KEGG" id="mtr:11433851"/>
<dbReference type="eggNOG" id="ENOG502QU6W">
    <property type="taxonomic scope" value="Eukaryota"/>
</dbReference>
<dbReference type="HOGENOM" id="CLU_012980_0_0_1"/>
<dbReference type="OMA" id="YVVDVCF"/>
<dbReference type="OrthoDB" id="414047at2759"/>
<dbReference type="ExpressionAtlas" id="Q6RHR6">
    <property type="expression patterns" value="differential"/>
</dbReference>
<dbReference type="GO" id="GO:0031965">
    <property type="term" value="C:nuclear membrane"/>
    <property type="evidence" value="ECO:0007669"/>
    <property type="project" value="UniProtKB-SubCell"/>
</dbReference>
<dbReference type="GO" id="GO:0034220">
    <property type="term" value="P:monoatomic ion transmembrane transport"/>
    <property type="evidence" value="ECO:0007669"/>
    <property type="project" value="UniProtKB-KW"/>
</dbReference>
<dbReference type="FunFam" id="3.40.50.720:FF:000176">
    <property type="entry name" value="Probable ion channel POLLUX"/>
    <property type="match status" value="1"/>
</dbReference>
<dbReference type="Gene3D" id="3.40.50.720">
    <property type="entry name" value="NAD(P)-binding Rossmann-like Domain"/>
    <property type="match status" value="1"/>
</dbReference>
<dbReference type="InterPro" id="IPR044849">
    <property type="entry name" value="CASTOR/POLLUX/SYM8-like"/>
</dbReference>
<dbReference type="InterPro" id="IPR010420">
    <property type="entry name" value="CASTOR/POLLUX/SYM8_dom"/>
</dbReference>
<dbReference type="InterPro" id="IPR036291">
    <property type="entry name" value="NAD(P)-bd_dom_sf"/>
</dbReference>
<dbReference type="InterPro" id="IPR003148">
    <property type="entry name" value="RCK_N"/>
</dbReference>
<dbReference type="PANTHER" id="PTHR31563">
    <property type="entry name" value="ION CHANNEL POLLUX-RELATED"/>
    <property type="match status" value="1"/>
</dbReference>
<dbReference type="PANTHER" id="PTHR31563:SF10">
    <property type="entry name" value="ION CHANNEL POLLUX-RELATED"/>
    <property type="match status" value="1"/>
</dbReference>
<dbReference type="Pfam" id="PF06241">
    <property type="entry name" value="Castor_Poll_mid"/>
    <property type="match status" value="1"/>
</dbReference>
<dbReference type="Pfam" id="PF22614">
    <property type="entry name" value="Slo-like_RCK"/>
    <property type="match status" value="1"/>
</dbReference>
<dbReference type="SUPFAM" id="SSF51735">
    <property type="entry name" value="NAD(P)-binding Rossmann-fold domains"/>
    <property type="match status" value="1"/>
</dbReference>
<dbReference type="SUPFAM" id="SSF81324">
    <property type="entry name" value="Voltage-gated potassium channels"/>
    <property type="match status" value="1"/>
</dbReference>
<dbReference type="PROSITE" id="PS51201">
    <property type="entry name" value="RCK_N"/>
    <property type="match status" value="2"/>
</dbReference>
<feature type="chain" id="PRO_0000165855" description="Ion channel DMI1">
    <location>
        <begin position="1"/>
        <end position="882"/>
    </location>
</feature>
<feature type="transmembrane region" description="Helical" evidence="1">
    <location>
        <begin position="129"/>
        <end position="149"/>
    </location>
</feature>
<feature type="transmembrane region" description="Helical" evidence="1">
    <location>
        <begin position="192"/>
        <end position="212"/>
    </location>
</feature>
<feature type="transmembrane region" description="Helical" evidence="1">
    <location>
        <begin position="255"/>
        <end position="275"/>
    </location>
</feature>
<feature type="transmembrane region" description="Helical" evidence="1">
    <location>
        <begin position="307"/>
        <end position="327"/>
    </location>
</feature>
<feature type="domain" description="RCK N-terminal 1" evidence="2">
    <location>
        <begin position="348"/>
        <end position="489"/>
    </location>
</feature>
<feature type="domain" description="RCK N-terminal 2" evidence="2">
    <location>
        <begin position="608"/>
        <end position="757"/>
    </location>
</feature>
<feature type="region of interest" description="Disordered" evidence="3">
    <location>
        <begin position="1"/>
        <end position="122"/>
    </location>
</feature>
<feature type="coiled-coil region" evidence="1">
    <location>
        <begin position="378"/>
        <end position="403"/>
    </location>
</feature>
<feature type="compositionally biased region" description="Polar residues" evidence="3">
    <location>
        <begin position="48"/>
        <end position="62"/>
    </location>
</feature>
<feature type="compositionally biased region" description="Pro residues" evidence="3">
    <location>
        <begin position="78"/>
        <end position="95"/>
    </location>
</feature>
<feature type="compositionally biased region" description="Low complexity" evidence="3">
    <location>
        <begin position="107"/>
        <end position="117"/>
    </location>
</feature>
<feature type="strand" evidence="10">
    <location>
        <begin position="351"/>
        <end position="355"/>
    </location>
</feature>
<feature type="helix" evidence="10">
    <location>
        <begin position="359"/>
        <end position="370"/>
    </location>
</feature>
<feature type="helix" evidence="10">
    <location>
        <begin position="371"/>
        <end position="374"/>
    </location>
</feature>
<feature type="strand" evidence="10">
    <location>
        <begin position="378"/>
        <end position="385"/>
    </location>
</feature>
<feature type="helix" evidence="10">
    <location>
        <begin position="387"/>
        <end position="395"/>
    </location>
</feature>
<feature type="strand" evidence="10">
    <location>
        <begin position="405"/>
        <end position="410"/>
    </location>
</feature>
<feature type="helix" evidence="10">
    <location>
        <begin position="416"/>
        <end position="421"/>
    </location>
</feature>
<feature type="turn" evidence="10">
    <location>
        <begin position="422"/>
        <end position="426"/>
    </location>
</feature>
<feature type="strand" evidence="10">
    <location>
        <begin position="428"/>
        <end position="432"/>
    </location>
</feature>
<feature type="helix" evidence="10">
    <location>
        <begin position="439"/>
        <end position="454"/>
    </location>
</feature>
<feature type="strand" evidence="10">
    <location>
        <begin position="461"/>
        <end position="469"/>
    </location>
</feature>
<feature type="helix" evidence="10">
    <location>
        <begin position="471"/>
        <end position="473"/>
    </location>
</feature>
<feature type="helix" evidence="10">
    <location>
        <begin position="477"/>
        <end position="480"/>
    </location>
</feature>
<feature type="helix" evidence="10">
    <location>
        <begin position="482"/>
        <end position="484"/>
    </location>
</feature>
<feature type="strand" evidence="10">
    <location>
        <begin position="485"/>
        <end position="489"/>
    </location>
</feature>
<feature type="helix" evidence="10">
    <location>
        <begin position="490"/>
        <end position="503"/>
    </location>
</feature>
<feature type="helix" evidence="10">
    <location>
        <begin position="507"/>
        <end position="513"/>
    </location>
</feature>
<feature type="strand" evidence="10">
    <location>
        <begin position="516"/>
        <end position="519"/>
    </location>
</feature>
<feature type="strand" evidence="10">
    <location>
        <begin position="521"/>
        <end position="525"/>
    </location>
</feature>
<feature type="helix" evidence="10">
    <location>
        <begin position="528"/>
        <end position="530"/>
    </location>
</feature>
<feature type="helix" evidence="10">
    <location>
        <begin position="535"/>
        <end position="538"/>
    </location>
</feature>
<feature type="strand" evidence="10">
    <location>
        <begin position="547"/>
        <end position="552"/>
    </location>
</feature>
<feature type="turn" evidence="10">
    <location>
        <begin position="553"/>
        <end position="556"/>
    </location>
</feature>
<feature type="strand" evidence="10">
    <location>
        <begin position="557"/>
        <end position="562"/>
    </location>
</feature>
<feature type="strand" evidence="10">
    <location>
        <begin position="574"/>
        <end position="581"/>
    </location>
</feature>
<feature type="strand" evidence="10">
    <location>
        <begin position="610"/>
        <end position="615"/>
    </location>
</feature>
<feature type="turn" evidence="10">
    <location>
        <begin position="618"/>
        <end position="620"/>
    </location>
</feature>
<feature type="helix" evidence="10">
    <location>
        <begin position="621"/>
        <end position="630"/>
    </location>
</feature>
<feature type="strand" evidence="10">
    <location>
        <begin position="635"/>
        <end position="643"/>
    </location>
</feature>
<feature type="helix" evidence="10">
    <location>
        <begin position="645"/>
        <end position="653"/>
    </location>
</feature>
<feature type="turn" evidence="10">
    <location>
        <begin position="654"/>
        <end position="656"/>
    </location>
</feature>
<feature type="strand" evidence="10">
    <location>
        <begin position="664"/>
        <end position="672"/>
    </location>
</feature>
<feature type="helix" evidence="10">
    <location>
        <begin position="677"/>
        <end position="682"/>
    </location>
</feature>
<feature type="strand" evidence="10">
    <location>
        <begin position="689"/>
        <end position="693"/>
    </location>
</feature>
<feature type="strand" evidence="10">
    <location>
        <begin position="697"/>
        <end position="699"/>
    </location>
</feature>
<feature type="helix" evidence="10">
    <location>
        <begin position="703"/>
        <end position="723"/>
    </location>
</feature>
<feature type="strand" evidence="10">
    <location>
        <begin position="757"/>
        <end position="761"/>
    </location>
</feature>
<feature type="helix" evidence="10">
    <location>
        <begin position="765"/>
        <end position="771"/>
    </location>
</feature>
<feature type="turn" evidence="10">
    <location>
        <begin position="775"/>
        <end position="777"/>
    </location>
</feature>
<feature type="strand" evidence="10">
    <location>
        <begin position="778"/>
        <end position="781"/>
    </location>
</feature>
<feature type="helix" evidence="10">
    <location>
        <begin position="784"/>
        <end position="793"/>
    </location>
</feature>
<feature type="helix" evidence="10">
    <location>
        <begin position="797"/>
        <end position="799"/>
    </location>
</feature>
<feature type="helix" evidence="10">
    <location>
        <begin position="800"/>
        <end position="806"/>
    </location>
</feature>
<feature type="strand" evidence="10">
    <location>
        <begin position="808"/>
        <end position="811"/>
    </location>
</feature>
<feature type="strand" evidence="10">
    <location>
        <begin position="813"/>
        <end position="818"/>
    </location>
</feature>
<feature type="turn" evidence="10">
    <location>
        <begin position="819"/>
        <end position="822"/>
    </location>
</feature>
<feature type="helix" evidence="10">
    <location>
        <begin position="831"/>
        <end position="837"/>
    </location>
</feature>
<feature type="turn" evidence="10">
    <location>
        <begin position="838"/>
        <end position="842"/>
    </location>
</feature>
<feature type="strand" evidence="10">
    <location>
        <begin position="845"/>
        <end position="849"/>
    </location>
</feature>
<feature type="strand" evidence="10">
    <location>
        <begin position="857"/>
        <end position="859"/>
    </location>
</feature>
<feature type="strand" evidence="10">
    <location>
        <begin position="874"/>
        <end position="879"/>
    </location>
</feature>
<proteinExistence type="evidence at protein level"/>
<reference key="1">
    <citation type="journal article" date="2004" name="Science">
        <title>Medicago truncatula DMI1 required for bacterial and fungal symbioses in legumes.</title>
        <authorList>
            <person name="Ane J.-M."/>
            <person name="Kiss G.B."/>
            <person name="Riely B.K."/>
            <person name="Penmetsa R.V."/>
            <person name="Oldroyd G.E."/>
            <person name="Ayax C."/>
            <person name="Levy J."/>
            <person name="Debelle F."/>
            <person name="Baek J.-M."/>
            <person name="Kalo P."/>
            <person name="Rosenberg C."/>
            <person name="Roe B.A."/>
            <person name="Long S.R."/>
            <person name="Denarie J."/>
            <person name="Cook D.R."/>
        </authorList>
    </citation>
    <scope>NUCLEOTIDE SEQUENCE [MRNA]</scope>
    <scope>INDUCTION</scope>
    <scope>TISSUE SPECIFICITY</scope>
    <scope>DISRUPTION PHENOTYPE</scope>
    <source>
        <tissue>Root</tissue>
    </source>
</reference>
<reference key="2">
    <citation type="submission" date="2007-04" db="EMBL/GenBank/DDBJ databases">
        <authorList>
            <consortium name="The International Medicago Genome Annotation Group"/>
        </authorList>
    </citation>
    <scope>NUCLEOTIDE SEQUENCE [GENOMIC DNA]</scope>
</reference>
<reference key="3">
    <citation type="journal article" date="2007" name="Plant J.">
        <title>The symbiotic ion channel homolog DMI1 is localized in the nuclear membrane of Medicago truncatula roots.</title>
        <authorList>
            <person name="Riely B.K."/>
            <person name="Lougnon G."/>
            <person name="Ane J.M."/>
            <person name="Cook D.R."/>
        </authorList>
    </citation>
    <scope>SUBCELLULAR LOCATION</scope>
    <scope>TISSUE SPECIFICITY</scope>
</reference>
<reference key="4">
    <citation type="journal article" date="2007" name="Plant Physiol.">
        <title>The Medicago truncatula DMI1 protein modulates cytosolic calcium signaling.</title>
        <authorList>
            <person name="Peiter E."/>
            <person name="Sun J."/>
            <person name="Heckmann A.B."/>
            <person name="Venkateshwaran M."/>
            <person name="Riely B.K."/>
            <person name="Otegui M.S."/>
            <person name="Edwards A."/>
            <person name="Freshour G."/>
            <person name="Hahn M.G."/>
            <person name="Cook D.R."/>
            <person name="Sanders D."/>
            <person name="Oldroyd G.E."/>
            <person name="Downie J.A."/>
            <person name="Ane J.M."/>
        </authorList>
    </citation>
    <scope>FUNCTION</scope>
</reference>
<reference key="5">
    <citation type="journal article" date="2016" name="Science">
        <title>Nuclear-localized cyclic nucleotide-gated channels mediate symbiotic calcium oscillations.</title>
        <authorList>
            <person name="Charpentier M."/>
            <person name="Sun J."/>
            <person name="Martins T.V."/>
            <person name="Radhakrishnan G.V."/>
            <person name="Findlay K."/>
            <person name="Soumpourou E."/>
            <person name="Thouin J."/>
            <person name="Very A.A."/>
            <person name="Sanders D."/>
            <person name="Morris R.J."/>
            <person name="Oldroyd G.E."/>
        </authorList>
    </citation>
    <scope>SUBCELLULAR LOCATION</scope>
    <scope>INTERACTION WITH CNGC15A; CNGC15B AND CNGC15C</scope>
</reference>
<protein>
    <recommendedName>
        <fullName evidence="8">Ion channel DMI1</fullName>
    </recommendedName>
    <alternativeName>
        <fullName evidence="8">Does not make infections protein 1</fullName>
    </alternativeName>
</protein>
<sequence>MAKSNEESSNLNVMNKPPLKKTKTLPSLNLRVSVTPPNPNDNNGIGGTSTTKTDFSEQQWNYPSFLGIGSTSRKRRQPPPPPSKPPVNLIPPHPRPLSVNDHNKTTSSLLPQPSSSSITKQQQQHSTSSPIFYLLVICCIILVPYSAYLQYKLAKLKDMKLQLCGQIDFCSRNGKTSIQEEVDDDDNADSRTIALYIVLFTLILPFVLYKYLDYLPQIINFLRRTESNKEDVPLKKRVAYMVDVFFSIYPYAKLLALLCATLFLIAFGGLALYAVTGGSMAEALWHSWTYVADAGNHAETEGTGQRIVSVSISAGGMLIFAMMLGLVSDAISEKVDSLRKGKSEVIERNHVLILGWSDKLGSLLKQLAIANKSVGGGVIVVLAEKEKEEMEMDIAKLEFDFMGTSVICRSGSPLILADLKKVSVSKARAIIVLAADENADQSDARALRVVLSLAGVKEGLRGHVVVEMSDLDNEPLVKLVGGELIETVVAHDVIGRLMIQCALQPGLAQIWEDILGFENAEFYIKRWPELDDLLFKDILISFPDAIPCGVKVAADGGKIVINPDDNYVLRDGDEVLVIAEDDDTYAPGPLPEVRKGYFPRIRDPPKYPEKILFCGWRRDIDDMIMVLEAFLAPGSELWMFNEVPEKERERKLAAGELDVFGLENIKLVHREGNAVIRRHLESLPLETFDSILILADESVEDSVAHSDSRSLATLLLIRDIQSRRLPYRDTKSTSLRLSGFSHNSWIREMQQASDKSIIISEILDSRTRNLVSVSRISDYVLSNELVSMALAMVAEDKQINRVLEELFAEEGNEMCIKPAEFYLFDQEELCFYDIMIRGRTRKEIVIGYRLANQERAIINPSEKSVPRKWSLDDVFVVLASGE</sequence>
<comment type="function">
    <text evidence="6">Required for early signal transduction events leading to endosymbiosis. Acts early in a signal transduction chain leading from the perception of Nod factor to the activation of calcium spiking. Also involved in mycorrhizal symbiosis. May be involved in the regulation of the calcium channel responsible for calcium spiking by mobilizing another cation, and thereby altering the membrane potential.</text>
</comment>
<comment type="subunit">
    <text evidence="7">Interacts (via c-terminus) with CNGC15A, CNGC15B and CNGC15C (via N-terminus). The Nod factor has no effect on these interactions, implying that the complex is maintained after activation.</text>
</comment>
<comment type="subcellular location">
    <subcellularLocation>
        <location evidence="5 7">Nucleus membrane</location>
        <topology evidence="5">Multi-pass membrane protein</topology>
    </subcellularLocation>
</comment>
<comment type="tissue specificity">
    <text evidence="4 5">Mainly expressed in roots and nodules. Also detected in pods, flowers, leaves, and stems.</text>
</comment>
<comment type="induction">
    <text evidence="4">Not induced after bacterial or Nod factor treatment.</text>
</comment>
<comment type="domain">
    <text>The N-terminal domain (1-76) is sufficient, but not required, to target DMI1 to the nucleus.</text>
</comment>
<comment type="disruption phenotype">
    <text evidence="4">Loss of microbial symbioses. Undergoes typical root hairs growth deformation in response to Nod factors, but exhibits no calcium spiking and nodule formation.</text>
</comment>
<comment type="similarity">
    <text evidence="9">Belongs to the castor/pollux (TC 1.A.1.23) family.</text>
</comment>
<gene>
    <name evidence="8" type="primary">DMI1</name>
</gene>
<accession>Q6RHR6</accession>
<accession>Q1SKV5</accession>